<comment type="function">
    <text evidence="2">Mitochondrial aminoacyl-tRNA synthetase that catalyzes the ATP-dependent ligation of histidine to the 3'-end of its cognate tRNA, via the formation of an aminoacyl-adenylate intermediate (His-AMP).</text>
</comment>
<comment type="catalytic activity">
    <reaction evidence="2">
        <text>tRNA(His) + L-histidine + ATP = L-histidyl-tRNA(His) + AMP + diphosphate + H(+)</text>
        <dbReference type="Rhea" id="RHEA:17313"/>
        <dbReference type="Rhea" id="RHEA-COMP:9665"/>
        <dbReference type="Rhea" id="RHEA-COMP:9689"/>
        <dbReference type="ChEBI" id="CHEBI:15378"/>
        <dbReference type="ChEBI" id="CHEBI:30616"/>
        <dbReference type="ChEBI" id="CHEBI:33019"/>
        <dbReference type="ChEBI" id="CHEBI:57595"/>
        <dbReference type="ChEBI" id="CHEBI:78442"/>
        <dbReference type="ChEBI" id="CHEBI:78527"/>
        <dbReference type="ChEBI" id="CHEBI:456215"/>
        <dbReference type="EC" id="6.1.1.21"/>
    </reaction>
</comment>
<comment type="subunit">
    <text evidence="2">Homodimer.</text>
</comment>
<comment type="subcellular location">
    <subcellularLocation>
        <location evidence="2">Mitochondrion</location>
    </subcellularLocation>
</comment>
<comment type="similarity">
    <text evidence="4">Belongs to the class-II aminoacyl-tRNA synthetase family.</text>
</comment>
<dbReference type="EC" id="6.1.1.21" evidence="2"/>
<dbReference type="EMBL" id="BC140699">
    <property type="protein sequence ID" value="AAI40700.1"/>
    <property type="molecule type" value="mRNA"/>
</dbReference>
<dbReference type="RefSeq" id="NP_001091602.1">
    <property type="nucleotide sequence ID" value="NM_001098133.2"/>
</dbReference>
<dbReference type="SMR" id="A5D7V9"/>
<dbReference type="FunCoup" id="A5D7V9">
    <property type="interactions" value="3107"/>
</dbReference>
<dbReference type="STRING" id="9913.ENSBTAP00000035214"/>
<dbReference type="PaxDb" id="9913-ENSBTAP00000035214"/>
<dbReference type="GeneID" id="615182"/>
<dbReference type="KEGG" id="bta:615182"/>
<dbReference type="CTD" id="23438"/>
<dbReference type="eggNOG" id="KOG1936">
    <property type="taxonomic scope" value="Eukaryota"/>
</dbReference>
<dbReference type="InParanoid" id="A5D7V9"/>
<dbReference type="OrthoDB" id="1906957at2759"/>
<dbReference type="Proteomes" id="UP000009136">
    <property type="component" value="Unplaced"/>
</dbReference>
<dbReference type="GO" id="GO:0005829">
    <property type="term" value="C:cytosol"/>
    <property type="evidence" value="ECO:0000318"/>
    <property type="project" value="GO_Central"/>
</dbReference>
<dbReference type="GO" id="GO:0005739">
    <property type="term" value="C:mitochondrion"/>
    <property type="evidence" value="ECO:0000318"/>
    <property type="project" value="GO_Central"/>
</dbReference>
<dbReference type="GO" id="GO:0005524">
    <property type="term" value="F:ATP binding"/>
    <property type="evidence" value="ECO:0007669"/>
    <property type="project" value="UniProtKB-KW"/>
</dbReference>
<dbReference type="GO" id="GO:0004821">
    <property type="term" value="F:histidine-tRNA ligase activity"/>
    <property type="evidence" value="ECO:0000318"/>
    <property type="project" value="GO_Central"/>
</dbReference>
<dbReference type="GO" id="GO:0042802">
    <property type="term" value="F:identical protein binding"/>
    <property type="evidence" value="ECO:0000318"/>
    <property type="project" value="GO_Central"/>
</dbReference>
<dbReference type="GO" id="GO:0003723">
    <property type="term" value="F:RNA binding"/>
    <property type="evidence" value="ECO:0000318"/>
    <property type="project" value="GO_Central"/>
</dbReference>
<dbReference type="GO" id="GO:0006427">
    <property type="term" value="P:histidyl-tRNA aminoacylation"/>
    <property type="evidence" value="ECO:0000318"/>
    <property type="project" value="GO_Central"/>
</dbReference>
<dbReference type="CDD" id="cd00773">
    <property type="entry name" value="HisRS-like_core"/>
    <property type="match status" value="1"/>
</dbReference>
<dbReference type="CDD" id="cd00859">
    <property type="entry name" value="HisRS_anticodon"/>
    <property type="match status" value="1"/>
</dbReference>
<dbReference type="FunFam" id="3.40.50.800:FF:000008">
    <property type="entry name" value="histidine--tRNA ligase, cytoplasmic isoform X1"/>
    <property type="match status" value="1"/>
</dbReference>
<dbReference type="FunFam" id="3.30.930.10:FF:000021">
    <property type="entry name" value="Probable histidine--tRNA ligase, mitochondrial"/>
    <property type="match status" value="1"/>
</dbReference>
<dbReference type="Gene3D" id="3.40.50.800">
    <property type="entry name" value="Anticodon-binding domain"/>
    <property type="match status" value="1"/>
</dbReference>
<dbReference type="Gene3D" id="3.30.930.10">
    <property type="entry name" value="Bira Bifunctional Protein, Domain 2"/>
    <property type="match status" value="1"/>
</dbReference>
<dbReference type="InterPro" id="IPR006195">
    <property type="entry name" value="aa-tRNA-synth_II"/>
</dbReference>
<dbReference type="InterPro" id="IPR045864">
    <property type="entry name" value="aa-tRNA-synth_II/BPL/LPL"/>
</dbReference>
<dbReference type="InterPro" id="IPR004154">
    <property type="entry name" value="Anticodon-bd"/>
</dbReference>
<dbReference type="InterPro" id="IPR036621">
    <property type="entry name" value="Anticodon-bd_dom_sf"/>
</dbReference>
<dbReference type="InterPro" id="IPR015807">
    <property type="entry name" value="His-tRNA-ligase"/>
</dbReference>
<dbReference type="InterPro" id="IPR041715">
    <property type="entry name" value="HisRS-like_core"/>
</dbReference>
<dbReference type="InterPro" id="IPR004516">
    <property type="entry name" value="HisRS/HisZ"/>
</dbReference>
<dbReference type="InterPro" id="IPR033656">
    <property type="entry name" value="HisRS_anticodon"/>
</dbReference>
<dbReference type="NCBIfam" id="TIGR00442">
    <property type="entry name" value="hisS"/>
    <property type="match status" value="1"/>
</dbReference>
<dbReference type="PANTHER" id="PTHR11476:SF6">
    <property type="entry name" value="HISTIDINE--TRNA LIGASE, MITOCHONDRIAL"/>
    <property type="match status" value="1"/>
</dbReference>
<dbReference type="PANTHER" id="PTHR11476">
    <property type="entry name" value="HISTIDYL-TRNA SYNTHETASE"/>
    <property type="match status" value="1"/>
</dbReference>
<dbReference type="Pfam" id="PF03129">
    <property type="entry name" value="HGTP_anticodon"/>
    <property type="match status" value="1"/>
</dbReference>
<dbReference type="Pfam" id="PF13393">
    <property type="entry name" value="tRNA-synt_His"/>
    <property type="match status" value="1"/>
</dbReference>
<dbReference type="PIRSF" id="PIRSF001549">
    <property type="entry name" value="His-tRNA_synth"/>
    <property type="match status" value="1"/>
</dbReference>
<dbReference type="SUPFAM" id="SSF52954">
    <property type="entry name" value="Class II aaRS ABD-related"/>
    <property type="match status" value="1"/>
</dbReference>
<dbReference type="SUPFAM" id="SSF55681">
    <property type="entry name" value="Class II aaRS and biotin synthetases"/>
    <property type="match status" value="1"/>
</dbReference>
<dbReference type="PROSITE" id="PS50862">
    <property type="entry name" value="AA_TRNA_LIGASE_II"/>
    <property type="match status" value="1"/>
</dbReference>
<feature type="transit peptide" description="Mitochondrion" evidence="3">
    <location>
        <begin position="1"/>
        <end position="33"/>
    </location>
</feature>
<feature type="chain" id="PRO_0000341688" description="Histidine--tRNA ligase, mitochondrial">
    <location>
        <begin position="34"/>
        <end position="506"/>
    </location>
</feature>
<feature type="binding site" evidence="1">
    <location>
        <begin position="131"/>
        <end position="133"/>
    </location>
    <ligand>
        <name>L-histidine</name>
        <dbReference type="ChEBI" id="CHEBI:57595"/>
    </ligand>
</feature>
<feature type="binding site" evidence="1">
    <location>
        <position position="158"/>
    </location>
    <ligand>
        <name>L-histidine</name>
        <dbReference type="ChEBI" id="CHEBI:57595"/>
    </ligand>
</feature>
<feature type="binding site" evidence="1">
    <location>
        <position position="174"/>
    </location>
    <ligand>
        <name>L-histidine</name>
        <dbReference type="ChEBI" id="CHEBI:57595"/>
    </ligand>
</feature>
<feature type="binding site" evidence="1">
    <location>
        <position position="178"/>
    </location>
    <ligand>
        <name>L-histidine</name>
        <dbReference type="ChEBI" id="CHEBI:57595"/>
    </ligand>
</feature>
<feature type="binding site" evidence="1">
    <location>
        <position position="327"/>
    </location>
    <ligand>
        <name>L-histidine</name>
        <dbReference type="ChEBI" id="CHEBI:57595"/>
    </ligand>
</feature>
<feature type="binding site" evidence="1">
    <location>
        <begin position="331"/>
        <end position="332"/>
    </location>
    <ligand>
        <name>L-histidine</name>
        <dbReference type="ChEBI" id="CHEBI:57595"/>
    </ligand>
</feature>
<feature type="modified residue" description="Phosphoserine" evidence="2">
    <location>
        <position position="67"/>
    </location>
</feature>
<feature type="modified residue" description="N6-acetyllysine" evidence="2">
    <location>
        <position position="444"/>
    </location>
</feature>
<accession>A5D7V9</accession>
<reference key="1">
    <citation type="submission" date="2007-04" db="EMBL/GenBank/DDBJ databases">
        <authorList>
            <consortium name="NIH - Mammalian Gene Collection (MGC) project"/>
        </authorList>
    </citation>
    <scope>NUCLEOTIDE SEQUENCE [LARGE SCALE MRNA]</scope>
    <source>
        <strain>Hereford</strain>
        <tissue>Thymus</tissue>
    </source>
</reference>
<keyword id="KW-0007">Acetylation</keyword>
<keyword id="KW-0030">Aminoacyl-tRNA synthetase</keyword>
<keyword id="KW-0067">ATP-binding</keyword>
<keyword id="KW-0436">Ligase</keyword>
<keyword id="KW-0496">Mitochondrion</keyword>
<keyword id="KW-0547">Nucleotide-binding</keyword>
<keyword id="KW-0597">Phosphoprotein</keyword>
<keyword id="KW-0648">Protein biosynthesis</keyword>
<keyword id="KW-1185">Reference proteome</keyword>
<keyword id="KW-0809">Transit peptide</keyword>
<gene>
    <name type="primary">HARS2</name>
</gene>
<evidence type="ECO:0000250" key="1">
    <source>
        <dbReference type="UniProtKB" id="P12081"/>
    </source>
</evidence>
<evidence type="ECO:0000250" key="2">
    <source>
        <dbReference type="UniProtKB" id="P49590"/>
    </source>
</evidence>
<evidence type="ECO:0000255" key="3"/>
<evidence type="ECO:0000305" key="4"/>
<sequence length="506" mass="56914">MPQLGLLPGRAWTVLLGLLRPPPGALCIRAVRSHSQVAEALFASQLKPHQEKSNFTIKTPKGTRDLSPQQMVVREKILDVVVSCFKRHGAKGLDTPAFELKEILTEKYGEDSGLIYDLKDQGGELLSLRYDLTVPFARYLAMNKVKKMKRYHVGKVWRRESPTIVQGRYREFYQCDFDIAGQFDPMIPDAECLKIMCEILSGLHLGDFLIKVSDRRILDGIFAVCGVPESKFHAICSSVDKLDKISWKDVRHEMVVKKGLAPEVADRIGDYVQCHGGISLVEQMFQDPRLSQNKQALEGLGDLKLLFEYLTLFGVAEKVSFDLSLARGLDYYTGVIYEAVLLQTPVHAEEEPLNMGSVAAGGRYDGLVGMFDPRGHKVPCVGLSIGVERIFSIVEQRIKTFGEKIRTTETQVFVATPQKNFLQERLKLIAELWDAGIKAELMYKNNPKLLPQLHYCENMGIPLVVIIGEQELKEGVIKLRSVASREEVAIKRENLVAEIQKRLSES</sequence>
<proteinExistence type="evidence at transcript level"/>
<name>SYHM_BOVIN</name>
<organism>
    <name type="scientific">Bos taurus</name>
    <name type="common">Bovine</name>
    <dbReference type="NCBI Taxonomy" id="9913"/>
    <lineage>
        <taxon>Eukaryota</taxon>
        <taxon>Metazoa</taxon>
        <taxon>Chordata</taxon>
        <taxon>Craniata</taxon>
        <taxon>Vertebrata</taxon>
        <taxon>Euteleostomi</taxon>
        <taxon>Mammalia</taxon>
        <taxon>Eutheria</taxon>
        <taxon>Laurasiatheria</taxon>
        <taxon>Artiodactyla</taxon>
        <taxon>Ruminantia</taxon>
        <taxon>Pecora</taxon>
        <taxon>Bovidae</taxon>
        <taxon>Bovinae</taxon>
        <taxon>Bos</taxon>
    </lineage>
</organism>
<protein>
    <recommendedName>
        <fullName>Histidine--tRNA ligase, mitochondrial</fullName>
        <ecNumber evidence="2">6.1.1.21</ecNumber>
    </recommendedName>
    <alternativeName>
        <fullName>Histidyl-tRNA synthetase</fullName>
        <shortName>HisRS</shortName>
    </alternativeName>
</protein>